<dbReference type="EMBL" id="AJ248283">
    <property type="protein sequence ID" value="CAB49118.1"/>
    <property type="molecule type" value="Genomic_DNA"/>
</dbReference>
<dbReference type="EMBL" id="HE613800">
    <property type="protein sequence ID" value="CCE69570.1"/>
    <property type="molecule type" value="Genomic_DNA"/>
</dbReference>
<dbReference type="PIR" id="G75208">
    <property type="entry name" value="G75208"/>
</dbReference>
<dbReference type="RefSeq" id="WP_010867318.1">
    <property type="nucleotide sequence ID" value="NC_000868.1"/>
</dbReference>
<dbReference type="SMR" id="Q9V280"/>
<dbReference type="STRING" id="272844.PAB2224"/>
<dbReference type="KEGG" id="pab:PAB2224"/>
<dbReference type="PATRIC" id="fig|272844.11.peg.208"/>
<dbReference type="eggNOG" id="arCOG04385">
    <property type="taxonomic scope" value="Archaea"/>
</dbReference>
<dbReference type="HOGENOM" id="CLU_148458_0_0_2"/>
<dbReference type="OrthoDB" id="59816at2157"/>
<dbReference type="PhylomeDB" id="Q9V280"/>
<dbReference type="Proteomes" id="UP000000810">
    <property type="component" value="Chromosome"/>
</dbReference>
<dbReference type="Proteomes" id="UP000009139">
    <property type="component" value="Chromosome"/>
</dbReference>
<dbReference type="Gene3D" id="3.40.50.150">
    <property type="entry name" value="Vaccinia Virus protein VP39"/>
    <property type="match status" value="1"/>
</dbReference>
<dbReference type="HAMAP" id="MF_00341">
    <property type="entry name" value="UPF0146"/>
    <property type="match status" value="1"/>
</dbReference>
<dbReference type="InterPro" id="IPR029063">
    <property type="entry name" value="SAM-dependent_MTases_sf"/>
</dbReference>
<dbReference type="InterPro" id="IPR005353">
    <property type="entry name" value="UPF0146"/>
</dbReference>
<dbReference type="NCBIfam" id="NF003165">
    <property type="entry name" value="PRK04148.1"/>
    <property type="match status" value="1"/>
</dbReference>
<dbReference type="Pfam" id="PF03686">
    <property type="entry name" value="UPF0146"/>
    <property type="match status" value="1"/>
</dbReference>
<dbReference type="PIRSF" id="PIRSF016725">
    <property type="entry name" value="UCP016725"/>
    <property type="match status" value="1"/>
</dbReference>
<dbReference type="SUPFAM" id="SSF53335">
    <property type="entry name" value="S-adenosyl-L-methionine-dependent methyltransferases"/>
    <property type="match status" value="1"/>
</dbReference>
<comment type="similarity">
    <text evidence="1">Belongs to the UPF0146 family.</text>
</comment>
<evidence type="ECO:0000305" key="1"/>
<proteinExistence type="inferred from homology"/>
<organism>
    <name type="scientific">Pyrococcus abyssi (strain GE5 / Orsay)</name>
    <dbReference type="NCBI Taxonomy" id="272844"/>
    <lineage>
        <taxon>Archaea</taxon>
        <taxon>Methanobacteriati</taxon>
        <taxon>Methanobacteriota</taxon>
        <taxon>Thermococci</taxon>
        <taxon>Thermococcales</taxon>
        <taxon>Thermococcaceae</taxon>
        <taxon>Pyrococcus</taxon>
    </lineage>
</organism>
<feature type="chain" id="PRO_0000145096" description="UPF0146 protein PYRAB01940">
    <location>
        <begin position="1"/>
        <end position="131"/>
    </location>
</feature>
<protein>
    <recommendedName>
        <fullName>UPF0146 protein PYRAB01940</fullName>
    </recommendedName>
</protein>
<gene>
    <name type="ordered locus">PYRAB01940</name>
    <name type="ORF">PAB2224</name>
</gene>
<accession>Q9V280</accession>
<accession>G8ZG29</accession>
<sequence length="131" mass="14629">MIEVAEFIAREVKKGKVIEVGIGFYTRIAKRLKELGFDVLAIDINKDAVVNAKNSGLNAEVDDIFNPNISLYMGAKAIYSIRPTPEMMNYILKISKAVKVPAYIVPLTGDPVPQGMKLITYRGIPIYKWEP</sequence>
<name>Y194_PYRAB</name>
<reference key="1">
    <citation type="journal article" date="2003" name="Mol. Microbiol.">
        <title>An integrated analysis of the genome of the hyperthermophilic archaeon Pyrococcus abyssi.</title>
        <authorList>
            <person name="Cohen G.N."/>
            <person name="Barbe V."/>
            <person name="Flament D."/>
            <person name="Galperin M."/>
            <person name="Heilig R."/>
            <person name="Lecompte O."/>
            <person name="Poch O."/>
            <person name="Prieur D."/>
            <person name="Querellou J."/>
            <person name="Ripp R."/>
            <person name="Thierry J.-C."/>
            <person name="Van der Oost J."/>
            <person name="Weissenbach J."/>
            <person name="Zivanovic Y."/>
            <person name="Forterre P."/>
        </authorList>
    </citation>
    <scope>NUCLEOTIDE SEQUENCE [LARGE SCALE GENOMIC DNA]</scope>
    <source>
        <strain>GE5 / Orsay</strain>
    </source>
</reference>
<reference key="2">
    <citation type="journal article" date="2012" name="Curr. Microbiol.">
        <title>Re-annotation of two hyperthermophilic archaea Pyrococcus abyssi GE5 and Pyrococcus furiosus DSM 3638.</title>
        <authorList>
            <person name="Gao J."/>
            <person name="Wang J."/>
        </authorList>
    </citation>
    <scope>GENOME REANNOTATION</scope>
    <source>
        <strain>GE5 / Orsay</strain>
    </source>
</reference>